<protein>
    <recommendedName>
        <fullName evidence="1">Cobyric acid synthase</fullName>
    </recommendedName>
</protein>
<reference key="1">
    <citation type="journal article" date="2007" name="PLoS Biol.">
        <title>Evolution of symbiotic bacteria in the distal human intestine.</title>
        <authorList>
            <person name="Xu J."/>
            <person name="Mahowald M.A."/>
            <person name="Ley R.E."/>
            <person name="Lozupone C.A."/>
            <person name="Hamady M."/>
            <person name="Martens E.C."/>
            <person name="Henrissat B."/>
            <person name="Coutinho P.M."/>
            <person name="Minx P."/>
            <person name="Latreille P."/>
            <person name="Cordum H."/>
            <person name="Van Brunt A."/>
            <person name="Kim K."/>
            <person name="Fulton R.S."/>
            <person name="Fulton L.A."/>
            <person name="Clifton S.W."/>
            <person name="Wilson R.K."/>
            <person name="Knight R.D."/>
            <person name="Gordon J.I."/>
        </authorList>
    </citation>
    <scope>NUCLEOTIDE SEQUENCE [LARGE SCALE GENOMIC DNA]</scope>
    <source>
        <strain>ATCC 8503 / DSM 20701 / CIP 104284 / JCM 5825 / NCTC 11152</strain>
    </source>
</reference>
<sequence>MKQHLRPIMFVGTCSDAGKSVINAAFCRIFKQDGYQPAPFKAQNMSLNSYSTPEGGEMGRAQVVQAEACGISPHTDMNPILLKPTNDKSSQVVLNGKPVGNMSAKDYFGIQNQKEELFKEAIEAFKRLEARYNPIVLEGAGSISELNLRDRDITNMRMAIAAGASTYLVADIDRGGVFGSVYGTIALLRPEERVLMKGVIINKFRGDASLFEEGRSLLKELTGIPVVGVIPWFRDIKIEEEDSVALDMKNNTYKDGKINVAIILLKRMSNFTDFDVLEMDPRFNPYYTNNIDEIEKADIILLPGSKNTLSDLQSLRANGIAMAIIRAHKAGKKVIGICGGYQMMGVRLEDPESIEGNIPAIPGLGLLPQCTVIEQEKITRQSDFAFLPSSENKDCKGYEIHMGRTTLLGDAPEQPVARLEDGRTDGYYLNNRCWGSYMHGILDNPAVLDNLAEGFDTETTTGPFDYAAFKEEQYDKLAALVREHVDMEYIYNSIKN</sequence>
<evidence type="ECO:0000255" key="1">
    <source>
        <dbReference type="HAMAP-Rule" id="MF_00028"/>
    </source>
</evidence>
<keyword id="KW-0169">Cobalamin biosynthesis</keyword>
<keyword id="KW-0315">Glutamine amidotransferase</keyword>
<keyword id="KW-1185">Reference proteome</keyword>
<comment type="function">
    <text evidence="1">Catalyzes amidations at positions B, D, E, and G on adenosylcobyrinic A,C-diamide. NH(2) groups are provided by glutamine, and one molecule of ATP is hydrogenolyzed for each amidation.</text>
</comment>
<comment type="pathway">
    <text evidence="1">Cofactor biosynthesis; adenosylcobalamin biosynthesis.</text>
</comment>
<comment type="similarity">
    <text evidence="1">Belongs to the CobB/CobQ family. CobQ subfamily.</text>
</comment>
<dbReference type="EMBL" id="CP000140">
    <property type="protein sequence ID" value="ABR43119.1"/>
    <property type="molecule type" value="Genomic_DNA"/>
</dbReference>
<dbReference type="RefSeq" id="WP_005856411.1">
    <property type="nucleotide sequence ID" value="NC_009615.1"/>
</dbReference>
<dbReference type="SMR" id="A6LBQ5"/>
<dbReference type="STRING" id="435591.BDI_1360"/>
<dbReference type="PaxDb" id="435591-BDI_1360"/>
<dbReference type="KEGG" id="pdi:BDI_1360"/>
<dbReference type="eggNOG" id="COG1492">
    <property type="taxonomic scope" value="Bacteria"/>
</dbReference>
<dbReference type="HOGENOM" id="CLU_019250_2_2_10"/>
<dbReference type="BioCyc" id="PDIS435591:G1G5A-1399-MONOMER"/>
<dbReference type="UniPathway" id="UPA00148"/>
<dbReference type="Proteomes" id="UP000000566">
    <property type="component" value="Chromosome"/>
</dbReference>
<dbReference type="GO" id="GO:0015420">
    <property type="term" value="F:ABC-type vitamin B12 transporter activity"/>
    <property type="evidence" value="ECO:0007669"/>
    <property type="project" value="UniProtKB-UniRule"/>
</dbReference>
<dbReference type="GO" id="GO:0003824">
    <property type="term" value="F:catalytic activity"/>
    <property type="evidence" value="ECO:0007669"/>
    <property type="project" value="InterPro"/>
</dbReference>
<dbReference type="GO" id="GO:0009236">
    <property type="term" value="P:cobalamin biosynthetic process"/>
    <property type="evidence" value="ECO:0007669"/>
    <property type="project" value="UniProtKB-UniRule"/>
</dbReference>
<dbReference type="CDD" id="cd05389">
    <property type="entry name" value="CobQ_N"/>
    <property type="match status" value="1"/>
</dbReference>
<dbReference type="CDD" id="cd01750">
    <property type="entry name" value="GATase1_CobQ"/>
    <property type="match status" value="1"/>
</dbReference>
<dbReference type="Gene3D" id="3.40.50.880">
    <property type="match status" value="1"/>
</dbReference>
<dbReference type="Gene3D" id="3.40.50.300">
    <property type="entry name" value="P-loop containing nucleotide triphosphate hydrolases"/>
    <property type="match status" value="1"/>
</dbReference>
<dbReference type="HAMAP" id="MF_00028">
    <property type="entry name" value="CobQ"/>
    <property type="match status" value="1"/>
</dbReference>
<dbReference type="InterPro" id="IPR029062">
    <property type="entry name" value="Class_I_gatase-like"/>
</dbReference>
<dbReference type="InterPro" id="IPR002586">
    <property type="entry name" value="CobQ/CobB/MinD/ParA_Nub-bd_dom"/>
</dbReference>
<dbReference type="InterPro" id="IPR033949">
    <property type="entry name" value="CobQ_GATase1"/>
</dbReference>
<dbReference type="InterPro" id="IPR047045">
    <property type="entry name" value="CobQ_N"/>
</dbReference>
<dbReference type="InterPro" id="IPR004459">
    <property type="entry name" value="CobQ_synth"/>
</dbReference>
<dbReference type="InterPro" id="IPR011698">
    <property type="entry name" value="GATase_3"/>
</dbReference>
<dbReference type="InterPro" id="IPR027417">
    <property type="entry name" value="P-loop_NTPase"/>
</dbReference>
<dbReference type="NCBIfam" id="TIGR00313">
    <property type="entry name" value="cobQ"/>
    <property type="match status" value="1"/>
</dbReference>
<dbReference type="NCBIfam" id="NF001989">
    <property type="entry name" value="PRK00784.1"/>
    <property type="match status" value="1"/>
</dbReference>
<dbReference type="PANTHER" id="PTHR21343:SF1">
    <property type="entry name" value="COBYRIC ACID SYNTHASE"/>
    <property type="match status" value="1"/>
</dbReference>
<dbReference type="PANTHER" id="PTHR21343">
    <property type="entry name" value="DETHIOBIOTIN SYNTHETASE"/>
    <property type="match status" value="1"/>
</dbReference>
<dbReference type="Pfam" id="PF01656">
    <property type="entry name" value="CbiA"/>
    <property type="match status" value="1"/>
</dbReference>
<dbReference type="Pfam" id="PF07685">
    <property type="entry name" value="GATase_3"/>
    <property type="match status" value="1"/>
</dbReference>
<dbReference type="SUPFAM" id="SSF52317">
    <property type="entry name" value="Class I glutamine amidotransferase-like"/>
    <property type="match status" value="1"/>
</dbReference>
<dbReference type="SUPFAM" id="SSF52540">
    <property type="entry name" value="P-loop containing nucleoside triphosphate hydrolases"/>
    <property type="match status" value="1"/>
</dbReference>
<dbReference type="PROSITE" id="PS51274">
    <property type="entry name" value="GATASE_COBBQ"/>
    <property type="match status" value="1"/>
</dbReference>
<organism>
    <name type="scientific">Parabacteroides distasonis (strain ATCC 8503 / DSM 20701 / CIP 104284 / JCM 5825 / NCTC 11152)</name>
    <dbReference type="NCBI Taxonomy" id="435591"/>
    <lineage>
        <taxon>Bacteria</taxon>
        <taxon>Pseudomonadati</taxon>
        <taxon>Bacteroidota</taxon>
        <taxon>Bacteroidia</taxon>
        <taxon>Bacteroidales</taxon>
        <taxon>Tannerellaceae</taxon>
        <taxon>Parabacteroides</taxon>
    </lineage>
</organism>
<proteinExistence type="inferred from homology"/>
<gene>
    <name evidence="1" type="primary">cobQ</name>
    <name type="ordered locus">BDI_1360</name>
</gene>
<accession>A6LBQ5</accession>
<feature type="chain" id="PRO_1000002369" description="Cobyric acid synthase">
    <location>
        <begin position="1"/>
        <end position="496"/>
    </location>
</feature>
<feature type="domain" description="GATase cobBQ-type" evidence="1">
    <location>
        <begin position="257"/>
        <end position="447"/>
    </location>
</feature>
<feature type="active site" description="Nucleophile" evidence="1">
    <location>
        <position position="338"/>
    </location>
</feature>
<feature type="active site" evidence="1">
    <location>
        <position position="439"/>
    </location>
</feature>
<name>COBQ_PARD8</name>